<feature type="chain" id="PRO_1000024694" description="ATP-dependent Clp protease ATP-binding subunit ClpX">
    <location>
        <begin position="1"/>
        <end position="449"/>
    </location>
</feature>
<feature type="domain" description="ClpX-type ZB" evidence="2">
    <location>
        <begin position="1"/>
        <end position="51"/>
    </location>
</feature>
<feature type="region of interest" description="Disordered" evidence="3">
    <location>
        <begin position="50"/>
        <end position="83"/>
    </location>
</feature>
<feature type="binding site" evidence="2">
    <location>
        <position position="10"/>
    </location>
    <ligand>
        <name>Zn(2+)</name>
        <dbReference type="ChEBI" id="CHEBI:29105"/>
    </ligand>
</feature>
<feature type="binding site" evidence="2">
    <location>
        <position position="13"/>
    </location>
    <ligand>
        <name>Zn(2+)</name>
        <dbReference type="ChEBI" id="CHEBI:29105"/>
    </ligand>
</feature>
<feature type="binding site" evidence="2">
    <location>
        <position position="32"/>
    </location>
    <ligand>
        <name>Zn(2+)</name>
        <dbReference type="ChEBI" id="CHEBI:29105"/>
    </ligand>
</feature>
<feature type="binding site" evidence="2">
    <location>
        <position position="35"/>
    </location>
    <ligand>
        <name>Zn(2+)</name>
        <dbReference type="ChEBI" id="CHEBI:29105"/>
    </ligand>
</feature>
<feature type="binding site" evidence="1">
    <location>
        <begin position="143"/>
        <end position="150"/>
    </location>
    <ligand>
        <name>ATP</name>
        <dbReference type="ChEBI" id="CHEBI:30616"/>
    </ligand>
</feature>
<dbReference type="EMBL" id="CP000110">
    <property type="protein sequence ID" value="ABB33843.1"/>
    <property type="molecule type" value="Genomic_DNA"/>
</dbReference>
<dbReference type="RefSeq" id="WP_011363104.1">
    <property type="nucleotide sequence ID" value="NC_007516.1"/>
</dbReference>
<dbReference type="SMR" id="Q3ANI9"/>
<dbReference type="STRING" id="110662.Syncc9605_0064"/>
<dbReference type="KEGG" id="syd:Syncc9605_0064"/>
<dbReference type="eggNOG" id="COG1219">
    <property type="taxonomic scope" value="Bacteria"/>
</dbReference>
<dbReference type="HOGENOM" id="CLU_014218_8_2_3"/>
<dbReference type="OrthoDB" id="9804062at2"/>
<dbReference type="GO" id="GO:0009376">
    <property type="term" value="C:HslUV protease complex"/>
    <property type="evidence" value="ECO:0007669"/>
    <property type="project" value="TreeGrafter"/>
</dbReference>
<dbReference type="GO" id="GO:0005524">
    <property type="term" value="F:ATP binding"/>
    <property type="evidence" value="ECO:0007669"/>
    <property type="project" value="UniProtKB-UniRule"/>
</dbReference>
<dbReference type="GO" id="GO:0016887">
    <property type="term" value="F:ATP hydrolysis activity"/>
    <property type="evidence" value="ECO:0007669"/>
    <property type="project" value="InterPro"/>
</dbReference>
<dbReference type="GO" id="GO:0140662">
    <property type="term" value="F:ATP-dependent protein folding chaperone"/>
    <property type="evidence" value="ECO:0007669"/>
    <property type="project" value="InterPro"/>
</dbReference>
<dbReference type="GO" id="GO:0046983">
    <property type="term" value="F:protein dimerization activity"/>
    <property type="evidence" value="ECO:0007669"/>
    <property type="project" value="InterPro"/>
</dbReference>
<dbReference type="GO" id="GO:0051082">
    <property type="term" value="F:unfolded protein binding"/>
    <property type="evidence" value="ECO:0007669"/>
    <property type="project" value="UniProtKB-UniRule"/>
</dbReference>
<dbReference type="GO" id="GO:0008270">
    <property type="term" value="F:zinc ion binding"/>
    <property type="evidence" value="ECO:0007669"/>
    <property type="project" value="InterPro"/>
</dbReference>
<dbReference type="GO" id="GO:0051301">
    <property type="term" value="P:cell division"/>
    <property type="evidence" value="ECO:0007669"/>
    <property type="project" value="TreeGrafter"/>
</dbReference>
<dbReference type="GO" id="GO:0051603">
    <property type="term" value="P:proteolysis involved in protein catabolic process"/>
    <property type="evidence" value="ECO:0007669"/>
    <property type="project" value="TreeGrafter"/>
</dbReference>
<dbReference type="CDD" id="cd19497">
    <property type="entry name" value="RecA-like_ClpX"/>
    <property type="match status" value="1"/>
</dbReference>
<dbReference type="FunFam" id="1.10.8.60:FF:000002">
    <property type="entry name" value="ATP-dependent Clp protease ATP-binding subunit ClpX"/>
    <property type="match status" value="1"/>
</dbReference>
<dbReference type="FunFam" id="3.40.50.300:FF:000005">
    <property type="entry name" value="ATP-dependent Clp protease ATP-binding subunit ClpX"/>
    <property type="match status" value="1"/>
</dbReference>
<dbReference type="Gene3D" id="1.10.8.60">
    <property type="match status" value="1"/>
</dbReference>
<dbReference type="Gene3D" id="6.20.220.10">
    <property type="entry name" value="ClpX chaperone, C4-type zinc finger domain"/>
    <property type="match status" value="1"/>
</dbReference>
<dbReference type="Gene3D" id="3.40.50.300">
    <property type="entry name" value="P-loop containing nucleotide triphosphate hydrolases"/>
    <property type="match status" value="1"/>
</dbReference>
<dbReference type="HAMAP" id="MF_00175">
    <property type="entry name" value="ClpX"/>
    <property type="match status" value="1"/>
</dbReference>
<dbReference type="InterPro" id="IPR003593">
    <property type="entry name" value="AAA+_ATPase"/>
</dbReference>
<dbReference type="InterPro" id="IPR050052">
    <property type="entry name" value="ATP-dep_Clp_protease_ClpX"/>
</dbReference>
<dbReference type="InterPro" id="IPR003959">
    <property type="entry name" value="ATPase_AAA_core"/>
</dbReference>
<dbReference type="InterPro" id="IPR019489">
    <property type="entry name" value="Clp_ATPase_C"/>
</dbReference>
<dbReference type="InterPro" id="IPR004487">
    <property type="entry name" value="Clp_protease_ATP-bd_su_ClpX"/>
</dbReference>
<dbReference type="InterPro" id="IPR046425">
    <property type="entry name" value="ClpX_bact"/>
</dbReference>
<dbReference type="InterPro" id="IPR027417">
    <property type="entry name" value="P-loop_NTPase"/>
</dbReference>
<dbReference type="InterPro" id="IPR010603">
    <property type="entry name" value="Znf_CppX_C4"/>
</dbReference>
<dbReference type="InterPro" id="IPR038366">
    <property type="entry name" value="Znf_CppX_C4_sf"/>
</dbReference>
<dbReference type="NCBIfam" id="TIGR00382">
    <property type="entry name" value="clpX"/>
    <property type="match status" value="1"/>
</dbReference>
<dbReference type="NCBIfam" id="NF003745">
    <property type="entry name" value="PRK05342.1"/>
    <property type="match status" value="1"/>
</dbReference>
<dbReference type="PANTHER" id="PTHR48102:SF7">
    <property type="entry name" value="ATP-DEPENDENT CLP PROTEASE ATP-BINDING SUBUNIT CLPX-LIKE, MITOCHONDRIAL"/>
    <property type="match status" value="1"/>
</dbReference>
<dbReference type="PANTHER" id="PTHR48102">
    <property type="entry name" value="ATP-DEPENDENT CLP PROTEASE ATP-BINDING SUBUNIT CLPX-LIKE, MITOCHONDRIAL-RELATED"/>
    <property type="match status" value="1"/>
</dbReference>
<dbReference type="Pfam" id="PF07724">
    <property type="entry name" value="AAA_2"/>
    <property type="match status" value="1"/>
</dbReference>
<dbReference type="Pfam" id="PF10431">
    <property type="entry name" value="ClpB_D2-small"/>
    <property type="match status" value="1"/>
</dbReference>
<dbReference type="Pfam" id="PF06689">
    <property type="entry name" value="zf-C4_ClpX"/>
    <property type="match status" value="1"/>
</dbReference>
<dbReference type="SMART" id="SM00382">
    <property type="entry name" value="AAA"/>
    <property type="match status" value="1"/>
</dbReference>
<dbReference type="SMART" id="SM01086">
    <property type="entry name" value="ClpB_D2-small"/>
    <property type="match status" value="1"/>
</dbReference>
<dbReference type="SMART" id="SM00994">
    <property type="entry name" value="zf-C4_ClpX"/>
    <property type="match status" value="1"/>
</dbReference>
<dbReference type="SUPFAM" id="SSF57716">
    <property type="entry name" value="Glucocorticoid receptor-like (DNA-binding domain)"/>
    <property type="match status" value="1"/>
</dbReference>
<dbReference type="SUPFAM" id="SSF52540">
    <property type="entry name" value="P-loop containing nucleoside triphosphate hydrolases"/>
    <property type="match status" value="1"/>
</dbReference>
<dbReference type="PROSITE" id="PS51902">
    <property type="entry name" value="CLPX_ZB"/>
    <property type="match status" value="1"/>
</dbReference>
<protein>
    <recommendedName>
        <fullName evidence="1">ATP-dependent Clp protease ATP-binding subunit ClpX</fullName>
    </recommendedName>
</protein>
<evidence type="ECO:0000255" key="1">
    <source>
        <dbReference type="HAMAP-Rule" id="MF_00175"/>
    </source>
</evidence>
<evidence type="ECO:0000255" key="2">
    <source>
        <dbReference type="PROSITE-ProRule" id="PRU01250"/>
    </source>
</evidence>
<evidence type="ECO:0000256" key="3">
    <source>
        <dbReference type="SAM" id="MobiDB-lite"/>
    </source>
</evidence>
<comment type="function">
    <text evidence="1">ATP-dependent specificity component of the Clp protease. It directs the protease to specific substrates. Can perform chaperone functions in the absence of ClpP.</text>
</comment>
<comment type="subunit">
    <text evidence="1">Component of the ClpX-ClpP complex. Forms a hexameric ring that, in the presence of ATP, binds to fourteen ClpP subunits assembled into a disk-like structure with a central cavity, resembling the structure of eukaryotic proteasomes.</text>
</comment>
<comment type="similarity">
    <text evidence="1">Belongs to the ClpX chaperone family.</text>
</comment>
<accession>Q3ANI9</accession>
<reference key="1">
    <citation type="submission" date="2005-07" db="EMBL/GenBank/DDBJ databases">
        <title>Complete sequence of Synechococcus sp. CC9605.</title>
        <authorList>
            <consortium name="US DOE Joint Genome Institute"/>
            <person name="Copeland A."/>
            <person name="Lucas S."/>
            <person name="Lapidus A."/>
            <person name="Barry K."/>
            <person name="Detter J.C."/>
            <person name="Glavina T."/>
            <person name="Hammon N."/>
            <person name="Israni S."/>
            <person name="Pitluck S."/>
            <person name="Schmutz J."/>
            <person name="Martinez M."/>
            <person name="Larimer F."/>
            <person name="Land M."/>
            <person name="Kyrpides N."/>
            <person name="Ivanova N."/>
            <person name="Richardson P."/>
        </authorList>
    </citation>
    <scope>NUCLEOTIDE SEQUENCE [LARGE SCALE GENOMIC DNA]</scope>
    <source>
        <strain>CC9605</strain>
    </source>
</reference>
<sequence length="449" mass="49308">MAKFDAHLKCSFCGKSQDQVRKLIAGPGVYICDECIDLCNEILDEELVDGQGNSRHSHEPSRKAMPAARKSSKPAPTLASIPRPQDIKSFLDQQVVGQDAAKKVMSVAVYNHYKRLAWQGDGQGETEETATRLHKSNILLIGPTGCGKTLLAQTLAEMLDVPFAVADATTLTEAGYVGEDVENILLRLLQKAEMDVDQAQRGIIYIDEIDKIARKSENPSITRDVSGEGVQQALLKMLEGTVANVPPQGGRKHPYQDCIQIDTSQILFICGGAFVGLEDVVQKRMGRNAIGFMPSDGRGRSRANRDLQAAQVLRHLEPDDLVRYGLIPEFIGRMPVSAVLEPLDESALQSILTEPRDALVKQFRTLLSMDNVQLQFADDAIEAIAQEAHRRKTGARALRGIVEELMLDLMYDLPSQTSVKEFTVTRAMVEEHTGGKVLPLPGAEQQKTA</sequence>
<name>CLPX_SYNSC</name>
<proteinExistence type="inferred from homology"/>
<keyword id="KW-0067">ATP-binding</keyword>
<keyword id="KW-0143">Chaperone</keyword>
<keyword id="KW-0479">Metal-binding</keyword>
<keyword id="KW-0547">Nucleotide-binding</keyword>
<keyword id="KW-0862">Zinc</keyword>
<gene>
    <name evidence="1" type="primary">clpX</name>
    <name type="ordered locus">Syncc9605_0064</name>
</gene>
<organism>
    <name type="scientific">Synechococcus sp. (strain CC9605)</name>
    <dbReference type="NCBI Taxonomy" id="110662"/>
    <lineage>
        <taxon>Bacteria</taxon>
        <taxon>Bacillati</taxon>
        <taxon>Cyanobacteriota</taxon>
        <taxon>Cyanophyceae</taxon>
        <taxon>Synechococcales</taxon>
        <taxon>Synechococcaceae</taxon>
        <taxon>Synechococcus</taxon>
    </lineage>
</organism>